<proteinExistence type="inferred from homology"/>
<accession>Q6CKZ4</accession>
<gene>
    <name type="primary">DBP6</name>
    <name type="ordered locus">KLLA0F06941g</name>
</gene>
<evidence type="ECO:0000250" key="1"/>
<evidence type="ECO:0000255" key="2">
    <source>
        <dbReference type="PROSITE-ProRule" id="PRU00541"/>
    </source>
</evidence>
<evidence type="ECO:0000255" key="3">
    <source>
        <dbReference type="PROSITE-ProRule" id="PRU00542"/>
    </source>
</evidence>
<evidence type="ECO:0000256" key="4">
    <source>
        <dbReference type="SAM" id="MobiDB-lite"/>
    </source>
</evidence>
<evidence type="ECO:0000305" key="5"/>
<organism>
    <name type="scientific">Kluyveromyces lactis (strain ATCC 8585 / CBS 2359 / DSM 70799 / NBRC 1267 / NRRL Y-1140 / WM37)</name>
    <name type="common">Yeast</name>
    <name type="synonym">Candida sphaerica</name>
    <dbReference type="NCBI Taxonomy" id="284590"/>
    <lineage>
        <taxon>Eukaryota</taxon>
        <taxon>Fungi</taxon>
        <taxon>Dikarya</taxon>
        <taxon>Ascomycota</taxon>
        <taxon>Saccharomycotina</taxon>
        <taxon>Saccharomycetes</taxon>
        <taxon>Saccharomycetales</taxon>
        <taxon>Saccharomycetaceae</taxon>
        <taxon>Kluyveromyces</taxon>
    </lineage>
</organism>
<comment type="function">
    <text evidence="1">ATP-binding RNA helicase involved in the biogenesis of 60S ribosomal subunits and is required for the normal formation of 25S and 5.8S rRNAs.</text>
</comment>
<comment type="catalytic activity">
    <reaction>
        <text>ATP + H2O = ADP + phosphate + H(+)</text>
        <dbReference type="Rhea" id="RHEA:13065"/>
        <dbReference type="ChEBI" id="CHEBI:15377"/>
        <dbReference type="ChEBI" id="CHEBI:15378"/>
        <dbReference type="ChEBI" id="CHEBI:30616"/>
        <dbReference type="ChEBI" id="CHEBI:43474"/>
        <dbReference type="ChEBI" id="CHEBI:456216"/>
        <dbReference type="EC" id="3.6.4.13"/>
    </reaction>
</comment>
<comment type="subunit">
    <text evidence="1">Associated with pre-ribosomal particles.</text>
</comment>
<comment type="subcellular location">
    <subcellularLocation>
        <location evidence="1">Nucleus</location>
        <location evidence="1">Nucleolus</location>
    </subcellularLocation>
</comment>
<comment type="domain">
    <text>The Q motif is unique to and characteristic of the DEAD box family of RNA helicases and controls ATP binding and hydrolysis.</text>
</comment>
<comment type="similarity">
    <text evidence="5">Belongs to the DEAD box helicase family. DDX51/DBP6 subfamily.</text>
</comment>
<dbReference type="EC" id="3.6.4.13"/>
<dbReference type="EMBL" id="CR382126">
    <property type="protein sequence ID" value="CAG98103.1"/>
    <property type="molecule type" value="Genomic_DNA"/>
</dbReference>
<dbReference type="RefSeq" id="XP_455395.1">
    <property type="nucleotide sequence ID" value="XM_455395.1"/>
</dbReference>
<dbReference type="SMR" id="Q6CKZ4"/>
<dbReference type="FunCoup" id="Q6CKZ4">
    <property type="interactions" value="923"/>
</dbReference>
<dbReference type="STRING" id="284590.Q6CKZ4"/>
<dbReference type="PaxDb" id="284590-Q6CKZ4"/>
<dbReference type="KEGG" id="kla:KLLA0_F06941g"/>
<dbReference type="eggNOG" id="KOG0350">
    <property type="taxonomic scope" value="Eukaryota"/>
</dbReference>
<dbReference type="HOGENOM" id="CLU_003041_15_2_1"/>
<dbReference type="InParanoid" id="Q6CKZ4"/>
<dbReference type="OMA" id="HLEWLVI"/>
<dbReference type="Proteomes" id="UP000000598">
    <property type="component" value="Chromosome F"/>
</dbReference>
<dbReference type="GO" id="GO:0005730">
    <property type="term" value="C:nucleolus"/>
    <property type="evidence" value="ECO:0007669"/>
    <property type="project" value="UniProtKB-SubCell"/>
</dbReference>
<dbReference type="GO" id="GO:0005524">
    <property type="term" value="F:ATP binding"/>
    <property type="evidence" value="ECO:0007669"/>
    <property type="project" value="UniProtKB-KW"/>
</dbReference>
<dbReference type="GO" id="GO:0016887">
    <property type="term" value="F:ATP hydrolysis activity"/>
    <property type="evidence" value="ECO:0007669"/>
    <property type="project" value="RHEA"/>
</dbReference>
<dbReference type="GO" id="GO:0003723">
    <property type="term" value="F:RNA binding"/>
    <property type="evidence" value="ECO:0007669"/>
    <property type="project" value="UniProtKB-KW"/>
</dbReference>
<dbReference type="GO" id="GO:0003724">
    <property type="term" value="F:RNA helicase activity"/>
    <property type="evidence" value="ECO:0007669"/>
    <property type="project" value="UniProtKB-EC"/>
</dbReference>
<dbReference type="GO" id="GO:0006364">
    <property type="term" value="P:rRNA processing"/>
    <property type="evidence" value="ECO:0007669"/>
    <property type="project" value="UniProtKB-KW"/>
</dbReference>
<dbReference type="CDD" id="cd17956">
    <property type="entry name" value="DEADc_DDX51"/>
    <property type="match status" value="1"/>
</dbReference>
<dbReference type="CDD" id="cd18787">
    <property type="entry name" value="SF2_C_DEAD"/>
    <property type="match status" value="1"/>
</dbReference>
<dbReference type="Gene3D" id="3.40.50.300">
    <property type="entry name" value="P-loop containing nucleotide triphosphate hydrolases"/>
    <property type="match status" value="2"/>
</dbReference>
<dbReference type="InterPro" id="IPR011545">
    <property type="entry name" value="DEAD/DEAH_box_helicase_dom"/>
</dbReference>
<dbReference type="InterPro" id="IPR014001">
    <property type="entry name" value="Helicase_ATP-bd"/>
</dbReference>
<dbReference type="InterPro" id="IPR001650">
    <property type="entry name" value="Helicase_C-like"/>
</dbReference>
<dbReference type="InterPro" id="IPR027417">
    <property type="entry name" value="P-loop_NTPase"/>
</dbReference>
<dbReference type="InterPro" id="IPR000629">
    <property type="entry name" value="RNA-helicase_DEAD-box_CS"/>
</dbReference>
<dbReference type="PANTHER" id="PTHR24031">
    <property type="entry name" value="RNA HELICASE"/>
    <property type="match status" value="1"/>
</dbReference>
<dbReference type="Pfam" id="PF00270">
    <property type="entry name" value="DEAD"/>
    <property type="match status" value="1"/>
</dbReference>
<dbReference type="Pfam" id="PF00271">
    <property type="entry name" value="Helicase_C"/>
    <property type="match status" value="1"/>
</dbReference>
<dbReference type="SMART" id="SM00487">
    <property type="entry name" value="DEXDc"/>
    <property type="match status" value="1"/>
</dbReference>
<dbReference type="SMART" id="SM00490">
    <property type="entry name" value="HELICc"/>
    <property type="match status" value="1"/>
</dbReference>
<dbReference type="SUPFAM" id="SSF52540">
    <property type="entry name" value="P-loop containing nucleoside triphosphate hydrolases"/>
    <property type="match status" value="1"/>
</dbReference>
<dbReference type="PROSITE" id="PS00039">
    <property type="entry name" value="DEAD_ATP_HELICASE"/>
    <property type="match status" value="1"/>
</dbReference>
<dbReference type="PROSITE" id="PS51192">
    <property type="entry name" value="HELICASE_ATP_BIND_1"/>
    <property type="match status" value="1"/>
</dbReference>
<dbReference type="PROSITE" id="PS51194">
    <property type="entry name" value="HELICASE_CTER"/>
    <property type="match status" value="1"/>
</dbReference>
<sequence>MFAARFDPTKVTENVLTAEVTQIKEPTVPQKRKRDAETDDEGSGEDDASSSEDDASSSEDDSDTISEQDENKVASVAPTETSQQSVDAKHSSVLNRFQQTLSLQGALSASDKVSSDNDVHDEDVSMKDVHSLTPIPQPAKVTNEALKLLDPSTYKSTAWDAATKIHYDSKMVKQFDSYEGELDARLLKNITSNFSSETFPIQTILFDKVLPLLNSSFKANRKLFTRRVGDILVNASTGSGKTLAYSVPLVQILRSRTVNKVRAIILVPTKILIHQVYDCLSKLSQGTSLNVSMSKLENSLKEEHNKFLYNSPDILIITPGRLVDHLQMESFDLKTLKFLVLDEADRLLNQSFQNWNQVLFHHLTNDKQDKRPGNVIKMVFSATLTTNAEKLYNLYLHNPKIFLTDSVKLYSIPKKLQELNVNIPTAKSLFKPLLLLRIIHDIKSSASRNAKILVFVKSNEASIRLESLLHAMLGSGIIEDEYNMFLSSIHSNISKGSSRKLIQEFASSEQKKSVLISTDIMARGIDINEITHVINYDLPISSQQYVHRCGRTARANTEGIAINLLVGKGEQKFWSQHIDTDLSRDIDGYQPSAYLDEEKLSELFSIEDTLKDTYKGCIKQLQTSKEADSK</sequence>
<keyword id="KW-0067">ATP-binding</keyword>
<keyword id="KW-0347">Helicase</keyword>
<keyword id="KW-0378">Hydrolase</keyword>
<keyword id="KW-0547">Nucleotide-binding</keyword>
<keyword id="KW-0539">Nucleus</keyword>
<keyword id="KW-1185">Reference proteome</keyword>
<keyword id="KW-0690">Ribosome biogenesis</keyword>
<keyword id="KW-0694">RNA-binding</keyword>
<keyword id="KW-0698">rRNA processing</keyword>
<reference key="1">
    <citation type="journal article" date="2004" name="Nature">
        <title>Genome evolution in yeasts.</title>
        <authorList>
            <person name="Dujon B."/>
            <person name="Sherman D."/>
            <person name="Fischer G."/>
            <person name="Durrens P."/>
            <person name="Casaregola S."/>
            <person name="Lafontaine I."/>
            <person name="de Montigny J."/>
            <person name="Marck C."/>
            <person name="Neuveglise C."/>
            <person name="Talla E."/>
            <person name="Goffard N."/>
            <person name="Frangeul L."/>
            <person name="Aigle M."/>
            <person name="Anthouard V."/>
            <person name="Babour A."/>
            <person name="Barbe V."/>
            <person name="Barnay S."/>
            <person name="Blanchin S."/>
            <person name="Beckerich J.-M."/>
            <person name="Beyne E."/>
            <person name="Bleykasten C."/>
            <person name="Boisrame A."/>
            <person name="Boyer J."/>
            <person name="Cattolico L."/>
            <person name="Confanioleri F."/>
            <person name="de Daruvar A."/>
            <person name="Despons L."/>
            <person name="Fabre E."/>
            <person name="Fairhead C."/>
            <person name="Ferry-Dumazet H."/>
            <person name="Groppi A."/>
            <person name="Hantraye F."/>
            <person name="Hennequin C."/>
            <person name="Jauniaux N."/>
            <person name="Joyet P."/>
            <person name="Kachouri R."/>
            <person name="Kerrest A."/>
            <person name="Koszul R."/>
            <person name="Lemaire M."/>
            <person name="Lesur I."/>
            <person name="Ma L."/>
            <person name="Muller H."/>
            <person name="Nicaud J.-M."/>
            <person name="Nikolski M."/>
            <person name="Oztas S."/>
            <person name="Ozier-Kalogeropoulos O."/>
            <person name="Pellenz S."/>
            <person name="Potier S."/>
            <person name="Richard G.-F."/>
            <person name="Straub M.-L."/>
            <person name="Suleau A."/>
            <person name="Swennen D."/>
            <person name="Tekaia F."/>
            <person name="Wesolowski-Louvel M."/>
            <person name="Westhof E."/>
            <person name="Wirth B."/>
            <person name="Zeniou-Meyer M."/>
            <person name="Zivanovic Y."/>
            <person name="Bolotin-Fukuhara M."/>
            <person name="Thierry A."/>
            <person name="Bouchier C."/>
            <person name="Caudron B."/>
            <person name="Scarpelli C."/>
            <person name="Gaillardin C."/>
            <person name="Weissenbach J."/>
            <person name="Wincker P."/>
            <person name="Souciet J.-L."/>
        </authorList>
    </citation>
    <scope>NUCLEOTIDE SEQUENCE [LARGE SCALE GENOMIC DNA]</scope>
    <source>
        <strain>ATCC 8585 / CBS 2359 / DSM 70799 / NBRC 1267 / NRRL Y-1140 / WM37</strain>
    </source>
</reference>
<feature type="chain" id="PRO_0000232295" description="ATP-dependent RNA helicase DBP6">
    <location>
        <begin position="1"/>
        <end position="630"/>
    </location>
</feature>
<feature type="domain" description="Helicase ATP-binding" evidence="2">
    <location>
        <begin position="222"/>
        <end position="402"/>
    </location>
</feature>
<feature type="domain" description="Helicase C-terminal" evidence="3">
    <location>
        <begin position="434"/>
        <end position="601"/>
    </location>
</feature>
<feature type="region of interest" description="Disordered" evidence="4">
    <location>
        <begin position="1"/>
        <end position="91"/>
    </location>
</feature>
<feature type="short sequence motif" description="Q motif">
    <location>
        <begin position="198"/>
        <end position="206"/>
    </location>
</feature>
<feature type="short sequence motif" description="DEAD box">
    <location>
        <begin position="342"/>
        <end position="345"/>
    </location>
</feature>
<feature type="compositionally biased region" description="Acidic residues" evidence="4">
    <location>
        <begin position="37"/>
        <end position="68"/>
    </location>
</feature>
<feature type="compositionally biased region" description="Polar residues" evidence="4">
    <location>
        <begin position="78"/>
        <end position="91"/>
    </location>
</feature>
<feature type="binding site" evidence="2">
    <location>
        <begin position="235"/>
        <end position="242"/>
    </location>
    <ligand>
        <name>ATP</name>
        <dbReference type="ChEBI" id="CHEBI:30616"/>
    </ligand>
</feature>
<name>DBP6_KLULA</name>
<protein>
    <recommendedName>
        <fullName>ATP-dependent RNA helicase DBP6</fullName>
        <ecNumber>3.6.4.13</ecNumber>
    </recommendedName>
</protein>